<keyword id="KW-1185">Reference proteome</keyword>
<keyword id="KW-0687">Ribonucleoprotein</keyword>
<keyword id="KW-0689">Ribosomal protein</keyword>
<keyword id="KW-0694">RNA-binding</keyword>
<keyword id="KW-0699">rRNA-binding</keyword>
<reference key="1">
    <citation type="submission" date="2007-11" db="EMBL/GenBank/DDBJ databases">
        <title>Complete genome sequence of Clostridium phytofermentans ISDg.</title>
        <authorList>
            <person name="Leschine S.B."/>
            <person name="Warnick T.A."/>
            <person name="Blanchard J.L."/>
            <person name="Schnell D.J."/>
            <person name="Petit E.L."/>
            <person name="LaTouf W.G."/>
            <person name="Copeland A."/>
            <person name="Lucas S."/>
            <person name="Lapidus A."/>
            <person name="Barry K."/>
            <person name="Glavina del Rio T."/>
            <person name="Dalin E."/>
            <person name="Tice H."/>
            <person name="Pitluck S."/>
            <person name="Kiss H."/>
            <person name="Brettin T."/>
            <person name="Bruce D."/>
            <person name="Detter J.C."/>
            <person name="Han C."/>
            <person name="Kuske C."/>
            <person name="Schmutz J."/>
            <person name="Larimer F."/>
            <person name="Land M."/>
            <person name="Hauser L."/>
            <person name="Kyrpides N."/>
            <person name="Kim E.A."/>
            <person name="Richardson P."/>
        </authorList>
    </citation>
    <scope>NUCLEOTIDE SEQUENCE [LARGE SCALE GENOMIC DNA]</scope>
    <source>
        <strain>ATCC 700394 / DSM 18823 / ISDg</strain>
    </source>
</reference>
<evidence type="ECO:0000255" key="1">
    <source>
        <dbReference type="HAMAP-Rule" id="MF_01365"/>
    </source>
</evidence>
<evidence type="ECO:0000305" key="2"/>
<feature type="chain" id="PRO_1000087037" description="Large ribosomal subunit protein uL6">
    <location>
        <begin position="1"/>
        <end position="180"/>
    </location>
</feature>
<accession>A9KJH9</accession>
<comment type="function">
    <text evidence="1">This protein binds to the 23S rRNA, and is important in its secondary structure. It is located near the subunit interface in the base of the L7/L12 stalk, and near the tRNA binding site of the peptidyltransferase center.</text>
</comment>
<comment type="subunit">
    <text evidence="1">Part of the 50S ribosomal subunit.</text>
</comment>
<comment type="similarity">
    <text evidence="1">Belongs to the universal ribosomal protein uL6 family.</text>
</comment>
<sequence>MSRIGRMPIAIPAGVTVEVAENNKVTVKGPNGTLDRVLPAEMDIKVEGDTVVVTRPNELKRMKSLHGLTRTLIANMVTGVTTGYQKVLEINGVGYRAAKNGKELTLTLGYSHPVVMKDPEGVETILEGQNKITVKGIDKEKVGQYAAEIRDKRRPEPYKGKGIKYSDEVIRRKVGKTGKK</sequence>
<name>RL6_LACP7</name>
<organism>
    <name type="scientific">Lachnoclostridium phytofermentans (strain ATCC 700394 / DSM 18823 / ISDg)</name>
    <name type="common">Clostridium phytofermentans</name>
    <dbReference type="NCBI Taxonomy" id="357809"/>
    <lineage>
        <taxon>Bacteria</taxon>
        <taxon>Bacillati</taxon>
        <taxon>Bacillota</taxon>
        <taxon>Clostridia</taxon>
        <taxon>Lachnospirales</taxon>
        <taxon>Lachnospiraceae</taxon>
    </lineage>
</organism>
<protein>
    <recommendedName>
        <fullName evidence="1">Large ribosomal subunit protein uL6</fullName>
    </recommendedName>
    <alternativeName>
        <fullName evidence="2">50S ribosomal protein L6</fullName>
    </alternativeName>
</protein>
<gene>
    <name evidence="1" type="primary">rplF</name>
    <name type="ordered locus">Cphy_3652</name>
</gene>
<dbReference type="EMBL" id="CP000885">
    <property type="protein sequence ID" value="ABX43999.1"/>
    <property type="molecule type" value="Genomic_DNA"/>
</dbReference>
<dbReference type="RefSeq" id="WP_012201647.1">
    <property type="nucleotide sequence ID" value="NC_010001.1"/>
</dbReference>
<dbReference type="SMR" id="A9KJH9"/>
<dbReference type="STRING" id="357809.Cphy_3652"/>
<dbReference type="KEGG" id="cpy:Cphy_3652"/>
<dbReference type="eggNOG" id="COG0097">
    <property type="taxonomic scope" value="Bacteria"/>
</dbReference>
<dbReference type="HOGENOM" id="CLU_065464_1_2_9"/>
<dbReference type="OrthoDB" id="9805007at2"/>
<dbReference type="Proteomes" id="UP000000370">
    <property type="component" value="Chromosome"/>
</dbReference>
<dbReference type="GO" id="GO:0022625">
    <property type="term" value="C:cytosolic large ribosomal subunit"/>
    <property type="evidence" value="ECO:0007669"/>
    <property type="project" value="TreeGrafter"/>
</dbReference>
<dbReference type="GO" id="GO:0019843">
    <property type="term" value="F:rRNA binding"/>
    <property type="evidence" value="ECO:0007669"/>
    <property type="project" value="UniProtKB-UniRule"/>
</dbReference>
<dbReference type="GO" id="GO:0003735">
    <property type="term" value="F:structural constituent of ribosome"/>
    <property type="evidence" value="ECO:0007669"/>
    <property type="project" value="InterPro"/>
</dbReference>
<dbReference type="GO" id="GO:0002181">
    <property type="term" value="P:cytoplasmic translation"/>
    <property type="evidence" value="ECO:0007669"/>
    <property type="project" value="TreeGrafter"/>
</dbReference>
<dbReference type="FunFam" id="3.90.930.12:FF:000001">
    <property type="entry name" value="50S ribosomal protein L6"/>
    <property type="match status" value="1"/>
</dbReference>
<dbReference type="FunFam" id="3.90.930.12:FF:000002">
    <property type="entry name" value="50S ribosomal protein L6"/>
    <property type="match status" value="1"/>
</dbReference>
<dbReference type="Gene3D" id="3.90.930.12">
    <property type="entry name" value="Ribosomal protein L6, alpha-beta domain"/>
    <property type="match status" value="2"/>
</dbReference>
<dbReference type="HAMAP" id="MF_01365_B">
    <property type="entry name" value="Ribosomal_uL6_B"/>
    <property type="match status" value="1"/>
</dbReference>
<dbReference type="InterPro" id="IPR000702">
    <property type="entry name" value="Ribosomal_uL6-like"/>
</dbReference>
<dbReference type="InterPro" id="IPR036789">
    <property type="entry name" value="Ribosomal_uL6-like_a/b-dom_sf"/>
</dbReference>
<dbReference type="InterPro" id="IPR020040">
    <property type="entry name" value="Ribosomal_uL6_a/b-dom"/>
</dbReference>
<dbReference type="InterPro" id="IPR019906">
    <property type="entry name" value="Ribosomal_uL6_bac-type"/>
</dbReference>
<dbReference type="InterPro" id="IPR002358">
    <property type="entry name" value="Ribosomal_uL6_CS"/>
</dbReference>
<dbReference type="NCBIfam" id="TIGR03654">
    <property type="entry name" value="L6_bact"/>
    <property type="match status" value="1"/>
</dbReference>
<dbReference type="PANTHER" id="PTHR11655">
    <property type="entry name" value="60S/50S RIBOSOMAL PROTEIN L6/L9"/>
    <property type="match status" value="1"/>
</dbReference>
<dbReference type="PANTHER" id="PTHR11655:SF14">
    <property type="entry name" value="LARGE RIBOSOMAL SUBUNIT PROTEIN UL6M"/>
    <property type="match status" value="1"/>
</dbReference>
<dbReference type="Pfam" id="PF00347">
    <property type="entry name" value="Ribosomal_L6"/>
    <property type="match status" value="2"/>
</dbReference>
<dbReference type="PIRSF" id="PIRSF002162">
    <property type="entry name" value="Ribosomal_L6"/>
    <property type="match status" value="1"/>
</dbReference>
<dbReference type="PRINTS" id="PR00059">
    <property type="entry name" value="RIBOSOMALL6"/>
</dbReference>
<dbReference type="SUPFAM" id="SSF56053">
    <property type="entry name" value="Ribosomal protein L6"/>
    <property type="match status" value="2"/>
</dbReference>
<dbReference type="PROSITE" id="PS00525">
    <property type="entry name" value="RIBOSOMAL_L6_1"/>
    <property type="match status" value="1"/>
</dbReference>
<proteinExistence type="inferred from homology"/>